<protein>
    <recommendedName>
        <fullName evidence="1">tRNA pseudouridine synthase B</fullName>
        <ecNumber evidence="1">5.4.99.25</ecNumber>
    </recommendedName>
    <alternativeName>
        <fullName evidence="1">tRNA pseudouridine(55) synthase</fullName>
        <shortName evidence="1">Psi55 synthase</shortName>
    </alternativeName>
    <alternativeName>
        <fullName evidence="1">tRNA pseudouridylate synthase</fullName>
    </alternativeName>
    <alternativeName>
        <fullName evidence="1">tRNA-uridine isomerase</fullName>
    </alternativeName>
</protein>
<dbReference type="EC" id="5.4.99.25" evidence="1"/>
<dbReference type="EMBL" id="CR626927">
    <property type="protein sequence ID" value="CAH05847.1"/>
    <property type="molecule type" value="Genomic_DNA"/>
</dbReference>
<dbReference type="RefSeq" id="WP_005783635.1">
    <property type="nucleotide sequence ID" value="NZ_UFTH01000001.1"/>
</dbReference>
<dbReference type="SMR" id="Q5LJ29"/>
<dbReference type="PaxDb" id="272559-BF9343_0068"/>
<dbReference type="GeneID" id="60368018"/>
<dbReference type="KEGG" id="bfs:BF9343_0068"/>
<dbReference type="eggNOG" id="COG0130">
    <property type="taxonomic scope" value="Bacteria"/>
</dbReference>
<dbReference type="HOGENOM" id="CLU_032087_2_0_10"/>
<dbReference type="Proteomes" id="UP000006731">
    <property type="component" value="Chromosome"/>
</dbReference>
<dbReference type="GO" id="GO:0003723">
    <property type="term" value="F:RNA binding"/>
    <property type="evidence" value="ECO:0007669"/>
    <property type="project" value="InterPro"/>
</dbReference>
<dbReference type="GO" id="GO:0160148">
    <property type="term" value="F:tRNA pseudouridine(55) synthase activity"/>
    <property type="evidence" value="ECO:0007669"/>
    <property type="project" value="UniProtKB-EC"/>
</dbReference>
<dbReference type="GO" id="GO:1990481">
    <property type="term" value="P:mRNA pseudouridine synthesis"/>
    <property type="evidence" value="ECO:0007669"/>
    <property type="project" value="TreeGrafter"/>
</dbReference>
<dbReference type="GO" id="GO:0031119">
    <property type="term" value="P:tRNA pseudouridine synthesis"/>
    <property type="evidence" value="ECO:0007669"/>
    <property type="project" value="UniProtKB-UniRule"/>
</dbReference>
<dbReference type="CDD" id="cd02573">
    <property type="entry name" value="PseudoU_synth_EcTruB"/>
    <property type="match status" value="1"/>
</dbReference>
<dbReference type="Gene3D" id="3.30.2350.10">
    <property type="entry name" value="Pseudouridine synthase"/>
    <property type="match status" value="1"/>
</dbReference>
<dbReference type="HAMAP" id="MF_01080">
    <property type="entry name" value="TruB_bact"/>
    <property type="match status" value="1"/>
</dbReference>
<dbReference type="InterPro" id="IPR020103">
    <property type="entry name" value="PsdUridine_synth_cat_dom_sf"/>
</dbReference>
<dbReference type="InterPro" id="IPR002501">
    <property type="entry name" value="PsdUridine_synth_N"/>
</dbReference>
<dbReference type="InterPro" id="IPR014780">
    <property type="entry name" value="tRNA_psdUridine_synth_TruB"/>
</dbReference>
<dbReference type="InterPro" id="IPR032819">
    <property type="entry name" value="TruB_C"/>
</dbReference>
<dbReference type="NCBIfam" id="TIGR00431">
    <property type="entry name" value="TruB"/>
    <property type="match status" value="1"/>
</dbReference>
<dbReference type="PANTHER" id="PTHR13767:SF2">
    <property type="entry name" value="PSEUDOURIDYLATE SYNTHASE TRUB1"/>
    <property type="match status" value="1"/>
</dbReference>
<dbReference type="PANTHER" id="PTHR13767">
    <property type="entry name" value="TRNA-PSEUDOURIDINE SYNTHASE"/>
    <property type="match status" value="1"/>
</dbReference>
<dbReference type="Pfam" id="PF16198">
    <property type="entry name" value="TruB_C_2"/>
    <property type="match status" value="1"/>
</dbReference>
<dbReference type="Pfam" id="PF01509">
    <property type="entry name" value="TruB_N"/>
    <property type="match status" value="1"/>
</dbReference>
<dbReference type="SUPFAM" id="SSF55120">
    <property type="entry name" value="Pseudouridine synthase"/>
    <property type="match status" value="1"/>
</dbReference>
<keyword id="KW-0413">Isomerase</keyword>
<keyword id="KW-0819">tRNA processing</keyword>
<organism>
    <name type="scientific">Bacteroides fragilis (strain ATCC 25285 / DSM 2151 / CCUG 4856 / JCM 11019 / LMG 10263 / NCTC 9343 / Onslow / VPI 2553 / EN-2)</name>
    <dbReference type="NCBI Taxonomy" id="272559"/>
    <lineage>
        <taxon>Bacteria</taxon>
        <taxon>Pseudomonadati</taxon>
        <taxon>Bacteroidota</taxon>
        <taxon>Bacteroidia</taxon>
        <taxon>Bacteroidales</taxon>
        <taxon>Bacteroidaceae</taxon>
        <taxon>Bacteroides</taxon>
    </lineage>
</organism>
<feature type="chain" id="PRO_0000229341" description="tRNA pseudouridine synthase B">
    <location>
        <begin position="1"/>
        <end position="233"/>
    </location>
</feature>
<feature type="active site" description="Nucleophile" evidence="1">
    <location>
        <position position="48"/>
    </location>
</feature>
<name>TRUB_BACFN</name>
<proteinExistence type="inferred from homology"/>
<sequence length="233" mass="26247">MNFKEGEVLYFNKPLGWTSFKVVGHARYHMCRRMKVKKLKVGHAGTLDPLATGVMIVCTGKATKRIEEFQYHTKEYVATIQLGATTPSYDLEHEIDATYPTEHITRELVEKTLKTFVGEIQQIPPAFSACKVDGARAYDLARKGQEVELKPKLLVIDEIELLECNLPEIKIRVVCSKGTYIRALARDIGEALQSGAHLTGLIRTRVGDVKLEQCLDPAKFAEWIDQQDVEISD</sequence>
<evidence type="ECO:0000255" key="1">
    <source>
        <dbReference type="HAMAP-Rule" id="MF_01080"/>
    </source>
</evidence>
<reference key="1">
    <citation type="journal article" date="2005" name="Science">
        <title>Extensive DNA inversions in the B. fragilis genome control variable gene expression.</title>
        <authorList>
            <person name="Cerdeno-Tarraga A.-M."/>
            <person name="Patrick S."/>
            <person name="Crossman L.C."/>
            <person name="Blakely G."/>
            <person name="Abratt V."/>
            <person name="Lennard N."/>
            <person name="Poxton I."/>
            <person name="Duerden B."/>
            <person name="Harris B."/>
            <person name="Quail M.A."/>
            <person name="Barron A."/>
            <person name="Clark L."/>
            <person name="Corton C."/>
            <person name="Doggett J."/>
            <person name="Holden M.T.G."/>
            <person name="Larke N."/>
            <person name="Line A."/>
            <person name="Lord A."/>
            <person name="Norbertczak H."/>
            <person name="Ormond D."/>
            <person name="Price C."/>
            <person name="Rabbinowitsch E."/>
            <person name="Woodward J."/>
            <person name="Barrell B.G."/>
            <person name="Parkhill J."/>
        </authorList>
    </citation>
    <scope>NUCLEOTIDE SEQUENCE [LARGE SCALE GENOMIC DNA]</scope>
    <source>
        <strain>ATCC 25285 / DSM 2151 / CCUG 4856 / JCM 11019 / LMG 10263 / NCTC 9343 / Onslow / VPI 2553 / EN-2</strain>
    </source>
</reference>
<comment type="function">
    <text evidence="1">Responsible for synthesis of pseudouridine from uracil-55 in the psi GC loop of transfer RNAs.</text>
</comment>
<comment type="catalytic activity">
    <reaction evidence="1">
        <text>uridine(55) in tRNA = pseudouridine(55) in tRNA</text>
        <dbReference type="Rhea" id="RHEA:42532"/>
        <dbReference type="Rhea" id="RHEA-COMP:10101"/>
        <dbReference type="Rhea" id="RHEA-COMP:10102"/>
        <dbReference type="ChEBI" id="CHEBI:65314"/>
        <dbReference type="ChEBI" id="CHEBI:65315"/>
        <dbReference type="EC" id="5.4.99.25"/>
    </reaction>
</comment>
<comment type="similarity">
    <text evidence="1">Belongs to the pseudouridine synthase TruB family. Type 1 subfamily.</text>
</comment>
<accession>Q5LJ29</accession>
<gene>
    <name evidence="1" type="primary">truB</name>
    <name type="ordered locus">BF0069</name>
</gene>